<keyword id="KW-0067">ATP-binding</keyword>
<keyword id="KW-0414">Isoprene biosynthesis</keyword>
<keyword id="KW-0418">Kinase</keyword>
<keyword id="KW-0547">Nucleotide-binding</keyword>
<keyword id="KW-0808">Transferase</keyword>
<dbReference type="EC" id="2.7.1.148" evidence="1"/>
<dbReference type="EMBL" id="CP000949">
    <property type="protein sequence ID" value="ACA74940.1"/>
    <property type="molecule type" value="Genomic_DNA"/>
</dbReference>
<dbReference type="SMR" id="B1JEQ0"/>
<dbReference type="STRING" id="390235.PputW619_4460"/>
<dbReference type="KEGG" id="ppw:PputW619_4460"/>
<dbReference type="eggNOG" id="COG1947">
    <property type="taxonomic scope" value="Bacteria"/>
</dbReference>
<dbReference type="HOGENOM" id="CLU_053057_3_0_6"/>
<dbReference type="OrthoDB" id="9809438at2"/>
<dbReference type="UniPathway" id="UPA00056">
    <property type="reaction ID" value="UER00094"/>
</dbReference>
<dbReference type="GO" id="GO:0050515">
    <property type="term" value="F:4-(cytidine 5'-diphospho)-2-C-methyl-D-erythritol kinase activity"/>
    <property type="evidence" value="ECO:0007669"/>
    <property type="project" value="UniProtKB-UniRule"/>
</dbReference>
<dbReference type="GO" id="GO:0005524">
    <property type="term" value="F:ATP binding"/>
    <property type="evidence" value="ECO:0007669"/>
    <property type="project" value="UniProtKB-UniRule"/>
</dbReference>
<dbReference type="GO" id="GO:0019288">
    <property type="term" value="P:isopentenyl diphosphate biosynthetic process, methylerythritol 4-phosphate pathway"/>
    <property type="evidence" value="ECO:0007669"/>
    <property type="project" value="UniProtKB-UniRule"/>
</dbReference>
<dbReference type="GO" id="GO:0016114">
    <property type="term" value="P:terpenoid biosynthetic process"/>
    <property type="evidence" value="ECO:0007669"/>
    <property type="project" value="InterPro"/>
</dbReference>
<dbReference type="FunFam" id="3.30.230.10:FF:000022">
    <property type="entry name" value="4-diphosphocytidyl-2-C-methyl-D-erythritol kinase"/>
    <property type="match status" value="1"/>
</dbReference>
<dbReference type="Gene3D" id="3.30.230.10">
    <property type="match status" value="1"/>
</dbReference>
<dbReference type="Gene3D" id="3.30.70.890">
    <property type="entry name" value="GHMP kinase, C-terminal domain"/>
    <property type="match status" value="1"/>
</dbReference>
<dbReference type="HAMAP" id="MF_00061">
    <property type="entry name" value="IspE"/>
    <property type="match status" value="1"/>
</dbReference>
<dbReference type="InterPro" id="IPR013750">
    <property type="entry name" value="GHMP_kinase_C_dom"/>
</dbReference>
<dbReference type="InterPro" id="IPR036554">
    <property type="entry name" value="GHMP_kinase_C_sf"/>
</dbReference>
<dbReference type="InterPro" id="IPR006204">
    <property type="entry name" value="GHMP_kinase_N_dom"/>
</dbReference>
<dbReference type="InterPro" id="IPR004424">
    <property type="entry name" value="IspE"/>
</dbReference>
<dbReference type="InterPro" id="IPR020568">
    <property type="entry name" value="Ribosomal_Su5_D2-typ_SF"/>
</dbReference>
<dbReference type="InterPro" id="IPR014721">
    <property type="entry name" value="Ribsml_uS5_D2-typ_fold_subgr"/>
</dbReference>
<dbReference type="NCBIfam" id="TIGR00154">
    <property type="entry name" value="ispE"/>
    <property type="match status" value="1"/>
</dbReference>
<dbReference type="PANTHER" id="PTHR43527">
    <property type="entry name" value="4-DIPHOSPHOCYTIDYL-2-C-METHYL-D-ERYTHRITOL KINASE, CHLOROPLASTIC"/>
    <property type="match status" value="1"/>
</dbReference>
<dbReference type="PANTHER" id="PTHR43527:SF2">
    <property type="entry name" value="4-DIPHOSPHOCYTIDYL-2-C-METHYL-D-ERYTHRITOL KINASE, CHLOROPLASTIC"/>
    <property type="match status" value="1"/>
</dbReference>
<dbReference type="Pfam" id="PF08544">
    <property type="entry name" value="GHMP_kinases_C"/>
    <property type="match status" value="1"/>
</dbReference>
<dbReference type="Pfam" id="PF00288">
    <property type="entry name" value="GHMP_kinases_N"/>
    <property type="match status" value="1"/>
</dbReference>
<dbReference type="PIRSF" id="PIRSF010376">
    <property type="entry name" value="IspE"/>
    <property type="match status" value="1"/>
</dbReference>
<dbReference type="SUPFAM" id="SSF55060">
    <property type="entry name" value="GHMP Kinase, C-terminal domain"/>
    <property type="match status" value="1"/>
</dbReference>
<dbReference type="SUPFAM" id="SSF54211">
    <property type="entry name" value="Ribosomal protein S5 domain 2-like"/>
    <property type="match status" value="1"/>
</dbReference>
<proteinExistence type="inferred from homology"/>
<feature type="chain" id="PRO_1000092106" description="4-diphosphocytidyl-2-C-methyl-D-erythritol kinase">
    <location>
        <begin position="1"/>
        <end position="286"/>
    </location>
</feature>
<feature type="active site" evidence="1">
    <location>
        <position position="11"/>
    </location>
</feature>
<feature type="active site" evidence="1">
    <location>
        <position position="136"/>
    </location>
</feature>
<feature type="binding site" evidence="1">
    <location>
        <begin position="94"/>
        <end position="104"/>
    </location>
    <ligand>
        <name>ATP</name>
        <dbReference type="ChEBI" id="CHEBI:30616"/>
    </ligand>
</feature>
<name>ISPE_PSEPW</name>
<evidence type="ECO:0000255" key="1">
    <source>
        <dbReference type="HAMAP-Rule" id="MF_00061"/>
    </source>
</evidence>
<comment type="function">
    <text evidence="1">Catalyzes the phosphorylation of the position 2 hydroxy group of 4-diphosphocytidyl-2C-methyl-D-erythritol.</text>
</comment>
<comment type="catalytic activity">
    <reaction evidence="1">
        <text>4-CDP-2-C-methyl-D-erythritol + ATP = 4-CDP-2-C-methyl-D-erythritol 2-phosphate + ADP + H(+)</text>
        <dbReference type="Rhea" id="RHEA:18437"/>
        <dbReference type="ChEBI" id="CHEBI:15378"/>
        <dbReference type="ChEBI" id="CHEBI:30616"/>
        <dbReference type="ChEBI" id="CHEBI:57823"/>
        <dbReference type="ChEBI" id="CHEBI:57919"/>
        <dbReference type="ChEBI" id="CHEBI:456216"/>
        <dbReference type="EC" id="2.7.1.148"/>
    </reaction>
</comment>
<comment type="pathway">
    <text evidence="1">Isoprenoid biosynthesis; isopentenyl diphosphate biosynthesis via DXP pathway; isopentenyl diphosphate from 1-deoxy-D-xylulose 5-phosphate: step 3/6.</text>
</comment>
<comment type="similarity">
    <text evidence="1">Belongs to the GHMP kinase family. IspE subfamily.</text>
</comment>
<reference key="1">
    <citation type="submission" date="2008-02" db="EMBL/GenBank/DDBJ databases">
        <title>Complete sequence of Pseudomonas putida W619.</title>
        <authorList>
            <person name="Copeland A."/>
            <person name="Lucas S."/>
            <person name="Lapidus A."/>
            <person name="Barry K."/>
            <person name="Detter J.C."/>
            <person name="Glavina del Rio T."/>
            <person name="Dalin E."/>
            <person name="Tice H."/>
            <person name="Pitluck S."/>
            <person name="Chain P."/>
            <person name="Malfatti S."/>
            <person name="Shin M."/>
            <person name="Vergez L."/>
            <person name="Schmutz J."/>
            <person name="Larimer F."/>
            <person name="Land M."/>
            <person name="Hauser L."/>
            <person name="Kyrpides N."/>
            <person name="Kim E."/>
            <person name="Taghavi S."/>
            <person name="Vangronsveld D."/>
            <person name="van der Lelie D."/>
            <person name="Richardson P."/>
        </authorList>
    </citation>
    <scope>NUCLEOTIDE SEQUENCE [LARGE SCALE GENOMIC DNA]</scope>
    <source>
        <strain>W619</strain>
    </source>
</reference>
<sequence>MHRLTLPAPAKLNLWLHIIGRRPDGYHELETVFQFLDHGDELTFALREDGAIRLHTEIEAVPHDSNLIVRAARRLQEQSGTGLGADIWLTKVLPMGGGIGGGSSDAATTLLALAHLWQLDWDEDRLAALGLTLGADVPVFVRGHAAFAQGVGEQLTPVDPAEPWYVVLVPQVSVSTVEIFSHPQLTRDSLPLKMRPVPEGNSRNDCQPVVEQSYPEVRNALNSLGKFTEARLTGTGSCVFGAFPSKAEADKVLALLSATQTGFVAKGSNVSMLHRKLQSLVKKSSA</sequence>
<gene>
    <name evidence="1" type="primary">ispE</name>
    <name type="ordered locus">PputW619_4460</name>
</gene>
<protein>
    <recommendedName>
        <fullName evidence="1">4-diphosphocytidyl-2-C-methyl-D-erythritol kinase</fullName>
        <shortName evidence="1">CMK</shortName>
        <ecNumber evidence="1">2.7.1.148</ecNumber>
    </recommendedName>
    <alternativeName>
        <fullName evidence="1">4-(cytidine-5'-diphospho)-2-C-methyl-D-erythritol kinase</fullName>
    </alternativeName>
</protein>
<organism>
    <name type="scientific">Pseudomonas putida (strain W619)</name>
    <dbReference type="NCBI Taxonomy" id="390235"/>
    <lineage>
        <taxon>Bacteria</taxon>
        <taxon>Pseudomonadati</taxon>
        <taxon>Pseudomonadota</taxon>
        <taxon>Gammaproteobacteria</taxon>
        <taxon>Pseudomonadales</taxon>
        <taxon>Pseudomonadaceae</taxon>
        <taxon>Pseudomonas</taxon>
    </lineage>
</organism>
<accession>B1JEQ0</accession>